<keyword id="KW-0963">Cytoplasm</keyword>
<keyword id="KW-0539">Nucleus</keyword>
<keyword id="KW-1185">Reference proteome</keyword>
<keyword id="KW-0749">Sporulation</keyword>
<keyword id="KW-0804">Transcription</keyword>
<keyword id="KW-0805">Transcription regulation</keyword>
<accession>F9X365</accession>
<gene>
    <name evidence="6" type="primary">MVE1</name>
    <name type="ORF">MYCGRDRAFT_37276</name>
</gene>
<name>VEA_ZYMTI</name>
<proteinExistence type="inferred from homology"/>
<protein>
    <recommendedName>
        <fullName evidence="7">Developmental and secondary metabolism regulator MVE1</fullName>
    </recommendedName>
    <alternativeName>
        <fullName evidence="7">Velvet complex subunit 1</fullName>
    </alternativeName>
</protein>
<reference key="1">
    <citation type="journal article" date="2011" name="PLoS Genet.">
        <title>Finished genome of the fungal wheat pathogen Mycosphaerella graminicola reveals dispensome structure, chromosome plasticity, and stealth pathogenesis.</title>
        <authorList>
            <person name="Goodwin S.B."/>
            <person name="Ben M'barek S."/>
            <person name="Dhillon B."/>
            <person name="Wittenberg A.H.J."/>
            <person name="Crane C.F."/>
            <person name="Hane J.K."/>
            <person name="Foster A.J."/>
            <person name="Van der Lee T.A.J."/>
            <person name="Grimwood J."/>
            <person name="Aerts A."/>
            <person name="Antoniw J."/>
            <person name="Bailey A."/>
            <person name="Bluhm B."/>
            <person name="Bowler J."/>
            <person name="Bristow J."/>
            <person name="van der Burgt A."/>
            <person name="Canto-Canche B."/>
            <person name="Churchill A.C.L."/>
            <person name="Conde-Ferraez L."/>
            <person name="Cools H.J."/>
            <person name="Coutinho P.M."/>
            <person name="Csukai M."/>
            <person name="Dehal P."/>
            <person name="De Wit P."/>
            <person name="Donzelli B."/>
            <person name="van de Geest H.C."/>
            <person name="van Ham R.C.H.J."/>
            <person name="Hammond-Kosack K.E."/>
            <person name="Henrissat B."/>
            <person name="Kilian A."/>
            <person name="Kobayashi A.K."/>
            <person name="Koopmann E."/>
            <person name="Kourmpetis Y."/>
            <person name="Kuzniar A."/>
            <person name="Lindquist E."/>
            <person name="Lombard V."/>
            <person name="Maliepaard C."/>
            <person name="Martins N."/>
            <person name="Mehrabi R."/>
            <person name="Nap J.P.H."/>
            <person name="Ponomarenko A."/>
            <person name="Rudd J.J."/>
            <person name="Salamov A."/>
            <person name="Schmutz J."/>
            <person name="Schouten H.J."/>
            <person name="Shapiro H."/>
            <person name="Stergiopoulos I."/>
            <person name="Torriani S.F.F."/>
            <person name="Tu H."/>
            <person name="de Vries R.P."/>
            <person name="Waalwijk C."/>
            <person name="Ware S.B."/>
            <person name="Wiebenga A."/>
            <person name="Zwiers L.-H."/>
            <person name="Oliver R.P."/>
            <person name="Grigoriev I.V."/>
            <person name="Kema G.H.J."/>
        </authorList>
    </citation>
    <scope>NUCLEOTIDE SEQUENCE [LARGE SCALE GENOMIC DNA]</scope>
    <source>
        <strain>CBS 115943 / IPO323</strain>
    </source>
</reference>
<reference key="2">
    <citation type="journal article" date="2011" name="Appl. Environ. Microbiol.">
        <title>MVE1, encoding the velvet gene product homolog in Mycosphaerella graminicola, is associated with aerial mycelium formation, melanin biosynthesis, hyphal swelling, and light signaling.</title>
        <authorList>
            <person name="Choi Y.E."/>
            <person name="Goodwin S.B."/>
        </authorList>
    </citation>
    <scope>FUNCTION</scope>
    <scope>DISRUPTION PHENOTYPE</scope>
</reference>
<sequence>MDRVSERVERGHYIPVENQTESSTSRVTVEGRKLTYRMSVLQQPVRARACGQGAKCKSPSADRRPVDPPPIVELKIFEGEDQENDITFTMHANYFLFATLEQARPIANGRVSNERSTPVLTGTPVAGMVYLDRPTPAGYFIFPDLSVRHEGVYRLSFSLYEDCKSPKDEDKTEEGAKSESDAHVTHRLEVKSEPFNVFSAKKFPGLTESTSLSRMVAEQGCRVRIRRDVRMRKRETKPGGREWDNYEDETAQARA</sequence>
<organism>
    <name type="scientific">Zymoseptoria tritici (strain CBS 115943 / IPO323)</name>
    <name type="common">Speckled leaf blotch fungus</name>
    <name type="synonym">Septoria tritici</name>
    <dbReference type="NCBI Taxonomy" id="336722"/>
    <lineage>
        <taxon>Eukaryota</taxon>
        <taxon>Fungi</taxon>
        <taxon>Dikarya</taxon>
        <taxon>Ascomycota</taxon>
        <taxon>Pezizomycotina</taxon>
        <taxon>Dothideomycetes</taxon>
        <taxon>Dothideomycetidae</taxon>
        <taxon>Mycosphaerellales</taxon>
        <taxon>Mycosphaerellaceae</taxon>
        <taxon>Zymoseptoria</taxon>
    </lineage>
</organism>
<comment type="function">
    <text evidence="2 5">Component of the velvet transcription factor complex that controls sexual/asexual developmental ratio in response to light, promoting sexual development in the darkness while stimulating asexual sporulation under illumination (By similarity). The velvet complex hat acts as a global regulator for secondary metabolite gene expression (By similarity). Controls the expression of the melanin gene cluster (PubMed:21115702). Mediates the light-stimulated formation of aerial mycelia (PubMed:21115702).</text>
</comment>
<comment type="subunit">
    <text evidence="1">Component of the heterotrimeric velvet complex composed of LAE1, MVE1 and VEL2; MVE1 acting as a bridging protein between LAE1 and VEL2 (By similarity).</text>
</comment>
<comment type="subcellular location">
    <subcellularLocation>
        <location evidence="2">Nucleus</location>
    </subcellularLocation>
    <subcellularLocation>
        <location evidence="2">Cytoplasm</location>
    </subcellularLocation>
    <text evidence="2">Enriched in the nucleus in the dark (By similarity).</text>
</comment>
<comment type="disruption phenotype">
    <text evidence="5">Impairs melanin biosynthesis (PubMed:21115702). Abolishes the light-stimulated formation of aerial mycelia (PubMed:21115702). Results in abnormal hyphal swelling, increases sensitivity to shaking force and significantly reduces hydrophobicity (PubMed:21115702).</text>
</comment>
<comment type="similarity">
    <text evidence="7">Belongs to the velvet family. VeA subfamily.</text>
</comment>
<dbReference type="EMBL" id="CM001197">
    <property type="protein sequence ID" value="EGP90115.1"/>
    <property type="molecule type" value="Genomic_DNA"/>
</dbReference>
<dbReference type="RefSeq" id="XP_003855139.1">
    <property type="nucleotide sequence ID" value="XM_003855091.1"/>
</dbReference>
<dbReference type="SMR" id="F9X365"/>
<dbReference type="STRING" id="336722.F9X365"/>
<dbReference type="EnsemblFungi" id="Mycgr3T37276">
    <property type="protein sequence ID" value="Mycgr3P37276"/>
    <property type="gene ID" value="Mycgr3G37276"/>
</dbReference>
<dbReference type="GeneID" id="13400733"/>
<dbReference type="KEGG" id="ztr:MYCGRDRAFT_37276"/>
<dbReference type="eggNOG" id="ENOG502S0HV">
    <property type="taxonomic scope" value="Eukaryota"/>
</dbReference>
<dbReference type="HOGENOM" id="CLU_022491_1_2_1"/>
<dbReference type="InParanoid" id="F9X365"/>
<dbReference type="OMA" id="PMHAGHQ"/>
<dbReference type="OrthoDB" id="5384689at2759"/>
<dbReference type="Proteomes" id="UP000008062">
    <property type="component" value="Chromosome 2"/>
</dbReference>
<dbReference type="GO" id="GO:0005737">
    <property type="term" value="C:cytoplasm"/>
    <property type="evidence" value="ECO:0007669"/>
    <property type="project" value="UniProtKB-SubCell"/>
</dbReference>
<dbReference type="GO" id="GO:0005634">
    <property type="term" value="C:nucleus"/>
    <property type="evidence" value="ECO:0007669"/>
    <property type="project" value="UniProtKB-SubCell"/>
</dbReference>
<dbReference type="GO" id="GO:0030435">
    <property type="term" value="P:sporulation resulting in formation of a cellular spore"/>
    <property type="evidence" value="ECO:0007669"/>
    <property type="project" value="UniProtKB-KW"/>
</dbReference>
<dbReference type="FunFam" id="2.60.40.3960:FF:000001">
    <property type="entry name" value="Sexual development activator VeA"/>
    <property type="match status" value="1"/>
</dbReference>
<dbReference type="Gene3D" id="2.60.40.3960">
    <property type="entry name" value="Velvet domain"/>
    <property type="match status" value="1"/>
</dbReference>
<dbReference type="InterPro" id="IPR021740">
    <property type="entry name" value="Velvet"/>
</dbReference>
<dbReference type="InterPro" id="IPR037525">
    <property type="entry name" value="Velvet_dom"/>
</dbReference>
<dbReference type="InterPro" id="IPR038491">
    <property type="entry name" value="Velvet_dom_sf"/>
</dbReference>
<dbReference type="PANTHER" id="PTHR33572:SF14">
    <property type="entry name" value="DEVELOPMENTAL AND SECONDARY METABOLISM REGULATOR VEA"/>
    <property type="match status" value="1"/>
</dbReference>
<dbReference type="PANTHER" id="PTHR33572">
    <property type="entry name" value="SPORE DEVELOPMENT REGULATOR VOSA"/>
    <property type="match status" value="1"/>
</dbReference>
<dbReference type="Pfam" id="PF11754">
    <property type="entry name" value="Velvet"/>
    <property type="match status" value="2"/>
</dbReference>
<dbReference type="PROSITE" id="PS51821">
    <property type="entry name" value="VELVET"/>
    <property type="match status" value="1"/>
</dbReference>
<evidence type="ECO:0000250" key="1">
    <source>
        <dbReference type="UniProtKB" id="C8VQG9"/>
    </source>
</evidence>
<evidence type="ECO:0000250" key="2">
    <source>
        <dbReference type="UniProtKB" id="C8VTV4"/>
    </source>
</evidence>
<evidence type="ECO:0000255" key="3">
    <source>
        <dbReference type="PROSITE-ProRule" id="PRU01165"/>
    </source>
</evidence>
<evidence type="ECO:0000256" key="4">
    <source>
        <dbReference type="SAM" id="MobiDB-lite"/>
    </source>
</evidence>
<evidence type="ECO:0000269" key="5">
    <source>
    </source>
</evidence>
<evidence type="ECO:0000303" key="6">
    <source>
    </source>
</evidence>
<evidence type="ECO:0000305" key="7"/>
<evidence type="ECO:0000312" key="8">
    <source>
        <dbReference type="EMBL" id="EGP90115.1"/>
    </source>
</evidence>
<feature type="chain" id="PRO_0000435768" description="Developmental and secondary metabolism regulator MVE1">
    <location>
        <begin position="1"/>
        <end position="255" status="greater than"/>
    </location>
</feature>
<feature type="domain" description="Velvet" evidence="3">
    <location>
        <begin position="31"/>
        <end position="226"/>
    </location>
</feature>
<feature type="region of interest" description="Disordered" evidence="4">
    <location>
        <begin position="163"/>
        <end position="184"/>
    </location>
</feature>
<feature type="region of interest" description="Disordered" evidence="4">
    <location>
        <begin position="229"/>
        <end position="255"/>
    </location>
</feature>
<feature type="short sequence motif" description="Nuclear localization signal" evidence="2">
    <location>
        <begin position="45"/>
        <end position="50"/>
    </location>
</feature>
<feature type="compositionally biased region" description="Acidic residues" evidence="4">
    <location>
        <begin position="245"/>
        <end position="255"/>
    </location>
</feature>
<feature type="non-terminal residue" evidence="8">
    <location>
        <position position="255"/>
    </location>
</feature>